<comment type="function">
    <text evidence="1">Synthesizes alpha-1,4-glucan chains using ADP-glucose.</text>
</comment>
<comment type="catalytic activity">
    <reaction evidence="1">
        <text>[(1-&gt;4)-alpha-D-glucosyl](n) + ADP-alpha-D-glucose = [(1-&gt;4)-alpha-D-glucosyl](n+1) + ADP + H(+)</text>
        <dbReference type="Rhea" id="RHEA:18189"/>
        <dbReference type="Rhea" id="RHEA-COMP:9584"/>
        <dbReference type="Rhea" id="RHEA-COMP:9587"/>
        <dbReference type="ChEBI" id="CHEBI:15378"/>
        <dbReference type="ChEBI" id="CHEBI:15444"/>
        <dbReference type="ChEBI" id="CHEBI:57498"/>
        <dbReference type="ChEBI" id="CHEBI:456216"/>
        <dbReference type="EC" id="2.4.1.21"/>
    </reaction>
</comment>
<comment type="pathway">
    <text evidence="1">Glycan biosynthesis; glycogen biosynthesis.</text>
</comment>
<comment type="similarity">
    <text evidence="1">Belongs to the glycosyltransferase 1 family. Bacterial/plant glycogen synthase subfamily.</text>
</comment>
<reference key="1">
    <citation type="journal article" date="2009" name="Appl. Environ. Microbiol.">
        <title>Three genomes from the phylum Acidobacteria provide insight into the lifestyles of these microorganisms in soils.</title>
        <authorList>
            <person name="Ward N.L."/>
            <person name="Challacombe J.F."/>
            <person name="Janssen P.H."/>
            <person name="Henrissat B."/>
            <person name="Coutinho P.M."/>
            <person name="Wu M."/>
            <person name="Xie G."/>
            <person name="Haft D.H."/>
            <person name="Sait M."/>
            <person name="Badger J."/>
            <person name="Barabote R.D."/>
            <person name="Bradley B."/>
            <person name="Brettin T.S."/>
            <person name="Brinkac L.M."/>
            <person name="Bruce D."/>
            <person name="Creasy T."/>
            <person name="Daugherty S.C."/>
            <person name="Davidsen T.M."/>
            <person name="DeBoy R.T."/>
            <person name="Detter J.C."/>
            <person name="Dodson R.J."/>
            <person name="Durkin A.S."/>
            <person name="Ganapathy A."/>
            <person name="Gwinn-Giglio M."/>
            <person name="Han C.S."/>
            <person name="Khouri H."/>
            <person name="Kiss H."/>
            <person name="Kothari S.P."/>
            <person name="Madupu R."/>
            <person name="Nelson K.E."/>
            <person name="Nelson W.C."/>
            <person name="Paulsen I."/>
            <person name="Penn K."/>
            <person name="Ren Q."/>
            <person name="Rosovitz M.J."/>
            <person name="Selengut J.D."/>
            <person name="Shrivastava S."/>
            <person name="Sullivan S.A."/>
            <person name="Tapia R."/>
            <person name="Thompson L.S."/>
            <person name="Watkins K.L."/>
            <person name="Yang Q."/>
            <person name="Yu C."/>
            <person name="Zafar N."/>
            <person name="Zhou L."/>
            <person name="Kuske C.R."/>
        </authorList>
    </citation>
    <scope>NUCLEOTIDE SEQUENCE [LARGE SCALE GENOMIC DNA]</scope>
    <source>
        <strain>Ellin345</strain>
    </source>
</reference>
<accession>Q1ILA0</accession>
<protein>
    <recommendedName>
        <fullName evidence="1">Glycogen synthase</fullName>
        <ecNumber evidence="1">2.4.1.21</ecNumber>
    </recommendedName>
    <alternativeName>
        <fullName evidence="1">Starch [bacterial glycogen] synthase</fullName>
    </alternativeName>
</protein>
<evidence type="ECO:0000255" key="1">
    <source>
        <dbReference type="HAMAP-Rule" id="MF_00484"/>
    </source>
</evidence>
<dbReference type="EC" id="2.4.1.21" evidence="1"/>
<dbReference type="EMBL" id="CP000360">
    <property type="protein sequence ID" value="ABF42350.1"/>
    <property type="molecule type" value="Genomic_DNA"/>
</dbReference>
<dbReference type="RefSeq" id="WP_011524149.1">
    <property type="nucleotide sequence ID" value="NC_008009.1"/>
</dbReference>
<dbReference type="SMR" id="Q1ILA0"/>
<dbReference type="STRING" id="204669.Acid345_3349"/>
<dbReference type="CAZy" id="GT5">
    <property type="family name" value="Glycosyltransferase Family 5"/>
</dbReference>
<dbReference type="EnsemblBacteria" id="ABF42350">
    <property type="protein sequence ID" value="ABF42350"/>
    <property type="gene ID" value="Acid345_3349"/>
</dbReference>
<dbReference type="KEGG" id="aba:Acid345_3349"/>
<dbReference type="eggNOG" id="COG0297">
    <property type="taxonomic scope" value="Bacteria"/>
</dbReference>
<dbReference type="HOGENOM" id="CLU_009583_18_2_0"/>
<dbReference type="OrthoDB" id="9808590at2"/>
<dbReference type="UniPathway" id="UPA00164"/>
<dbReference type="Proteomes" id="UP000002432">
    <property type="component" value="Chromosome"/>
</dbReference>
<dbReference type="GO" id="GO:0009011">
    <property type="term" value="F:alpha-1,4-glucan glucosyltransferase (ADP-glucose donor) activity"/>
    <property type="evidence" value="ECO:0007669"/>
    <property type="project" value="UniProtKB-UniRule"/>
</dbReference>
<dbReference type="GO" id="GO:0004373">
    <property type="term" value="F:alpha-1,4-glucan glucosyltransferase (UDP-glucose donor) activity"/>
    <property type="evidence" value="ECO:0007669"/>
    <property type="project" value="InterPro"/>
</dbReference>
<dbReference type="GO" id="GO:0005978">
    <property type="term" value="P:glycogen biosynthetic process"/>
    <property type="evidence" value="ECO:0007669"/>
    <property type="project" value="UniProtKB-UniRule"/>
</dbReference>
<dbReference type="CDD" id="cd03791">
    <property type="entry name" value="GT5_Glycogen_synthase_DULL1-like"/>
    <property type="match status" value="1"/>
</dbReference>
<dbReference type="Gene3D" id="3.40.50.2000">
    <property type="entry name" value="Glycogen Phosphorylase B"/>
    <property type="match status" value="2"/>
</dbReference>
<dbReference type="HAMAP" id="MF_00484">
    <property type="entry name" value="Glycogen_synth"/>
    <property type="match status" value="1"/>
</dbReference>
<dbReference type="InterPro" id="IPR001296">
    <property type="entry name" value="Glyco_trans_1"/>
</dbReference>
<dbReference type="InterPro" id="IPR011835">
    <property type="entry name" value="GS/SS"/>
</dbReference>
<dbReference type="InterPro" id="IPR013534">
    <property type="entry name" value="Starch_synth_cat_dom"/>
</dbReference>
<dbReference type="NCBIfam" id="TIGR02095">
    <property type="entry name" value="glgA"/>
    <property type="match status" value="1"/>
</dbReference>
<dbReference type="NCBIfam" id="NF001899">
    <property type="entry name" value="PRK00654.1-2"/>
    <property type="match status" value="1"/>
</dbReference>
<dbReference type="NCBIfam" id="NF001903">
    <property type="entry name" value="PRK00654.2-2"/>
    <property type="match status" value="1"/>
</dbReference>
<dbReference type="PANTHER" id="PTHR45825:SF11">
    <property type="entry name" value="ALPHA AMYLASE DOMAIN-CONTAINING PROTEIN"/>
    <property type="match status" value="1"/>
</dbReference>
<dbReference type="PANTHER" id="PTHR45825">
    <property type="entry name" value="GRANULE-BOUND STARCH SYNTHASE 1, CHLOROPLASTIC/AMYLOPLASTIC"/>
    <property type="match status" value="1"/>
</dbReference>
<dbReference type="Pfam" id="PF08323">
    <property type="entry name" value="Glyco_transf_5"/>
    <property type="match status" value="1"/>
</dbReference>
<dbReference type="Pfam" id="PF00534">
    <property type="entry name" value="Glycos_transf_1"/>
    <property type="match status" value="1"/>
</dbReference>
<dbReference type="SUPFAM" id="SSF53756">
    <property type="entry name" value="UDP-Glycosyltransferase/glycogen phosphorylase"/>
    <property type="match status" value="1"/>
</dbReference>
<organism>
    <name type="scientific">Koribacter versatilis (strain Ellin345)</name>
    <dbReference type="NCBI Taxonomy" id="204669"/>
    <lineage>
        <taxon>Bacteria</taxon>
        <taxon>Pseudomonadati</taxon>
        <taxon>Acidobacteriota</taxon>
        <taxon>Terriglobia</taxon>
        <taxon>Terriglobales</taxon>
        <taxon>Candidatus Korobacteraceae</taxon>
        <taxon>Candidatus Korobacter</taxon>
    </lineage>
</organism>
<name>GLGA_KORVE</name>
<keyword id="KW-0320">Glycogen biosynthesis</keyword>
<keyword id="KW-0328">Glycosyltransferase</keyword>
<keyword id="KW-1185">Reference proteome</keyword>
<keyword id="KW-0808">Transferase</keyword>
<sequence length="484" mass="54265">MHIAFAASECVPFSKTGGLADVVGAVPRALAALGHKVSVYTPLYRNTKLENPKTAVRSITVPFDDQYRFCSIVDGGMIDGVQFYFVDYPAYFDRDALYGTPIGDYHDNAERFALFSRAVIEGSKILGVPDIFHCHDWQSALIPVLLRTLYAEDPAFDHAKIVFTIHNMGYQGLFPGEILPLLMLPWDLFTLTKMEFYGKVNFLKGALVYADFVTTVSRRYALEIQTAEYGFGLEGVLRGRSGTVAGILNGVDYSEWSPETDRFIAAKFSADSLAAKAQDKADLLREFGLPETKLPVVGIVSRFAAQKGFDLIQQVGDRLAREEAIFVVLGSGDKTYEDLMRRLSKQYPNRFAVRVAYDNALAHKIEAGSDMFLMPSRYEPCGLNQIYSLRYGTVPIVRATGGLDDTIENWDPITNRGTGFKFVEYSGEDMLDTVRKALELFKDKTAWQKLMRNGMARDFSWNTAAKEYVRVYEKAKQVRAPMPV</sequence>
<proteinExistence type="inferred from homology"/>
<feature type="chain" id="PRO_1000014337" description="Glycogen synthase">
    <location>
        <begin position="1"/>
        <end position="484"/>
    </location>
</feature>
<feature type="binding site" evidence="1">
    <location>
        <position position="15"/>
    </location>
    <ligand>
        <name>ADP-alpha-D-glucose</name>
        <dbReference type="ChEBI" id="CHEBI:57498"/>
    </ligand>
</feature>
<gene>
    <name evidence="1" type="primary">glgA</name>
    <name type="ordered locus">Acid345_3349</name>
</gene>